<protein>
    <recommendedName>
        <fullName evidence="1">4-hydroxy-3-methylbut-2-en-1-yl diphosphate synthase (flavodoxin)</fullName>
        <ecNumber evidence="1">1.17.7.3</ecNumber>
    </recommendedName>
    <alternativeName>
        <fullName evidence="1">1-hydroxy-2-methyl-2-(E)-butenyl 4-diphosphate synthase</fullName>
    </alternativeName>
</protein>
<dbReference type="EC" id="1.17.7.3" evidence="1"/>
<dbReference type="EMBL" id="CP000447">
    <property type="protein sequence ID" value="ABI70969.1"/>
    <property type="molecule type" value="Genomic_DNA"/>
</dbReference>
<dbReference type="RefSeq" id="WP_011636590.1">
    <property type="nucleotide sequence ID" value="NC_008345.1"/>
</dbReference>
<dbReference type="SMR" id="Q085U6"/>
<dbReference type="STRING" id="318167.Sfri_1116"/>
<dbReference type="KEGG" id="sfr:Sfri_1116"/>
<dbReference type="eggNOG" id="COG0821">
    <property type="taxonomic scope" value="Bacteria"/>
</dbReference>
<dbReference type="HOGENOM" id="CLU_042258_0_0_6"/>
<dbReference type="OrthoDB" id="9803214at2"/>
<dbReference type="UniPathway" id="UPA00056">
    <property type="reaction ID" value="UER00096"/>
</dbReference>
<dbReference type="Proteomes" id="UP000000684">
    <property type="component" value="Chromosome"/>
</dbReference>
<dbReference type="GO" id="GO:0051539">
    <property type="term" value="F:4 iron, 4 sulfur cluster binding"/>
    <property type="evidence" value="ECO:0007669"/>
    <property type="project" value="UniProtKB-UniRule"/>
</dbReference>
<dbReference type="GO" id="GO:0046429">
    <property type="term" value="F:4-hydroxy-3-methylbut-2-en-1-yl diphosphate synthase activity (ferredoxin)"/>
    <property type="evidence" value="ECO:0007669"/>
    <property type="project" value="UniProtKB-UniRule"/>
</dbReference>
<dbReference type="GO" id="GO:0141197">
    <property type="term" value="F:4-hydroxy-3-methylbut-2-enyl-diphosphate synthase activity (flavodoxin)"/>
    <property type="evidence" value="ECO:0007669"/>
    <property type="project" value="UniProtKB-EC"/>
</dbReference>
<dbReference type="GO" id="GO:0005506">
    <property type="term" value="F:iron ion binding"/>
    <property type="evidence" value="ECO:0007669"/>
    <property type="project" value="InterPro"/>
</dbReference>
<dbReference type="GO" id="GO:0019288">
    <property type="term" value="P:isopentenyl diphosphate biosynthetic process, methylerythritol 4-phosphate pathway"/>
    <property type="evidence" value="ECO:0007669"/>
    <property type="project" value="UniProtKB-UniRule"/>
</dbReference>
<dbReference type="GO" id="GO:0016114">
    <property type="term" value="P:terpenoid biosynthetic process"/>
    <property type="evidence" value="ECO:0007669"/>
    <property type="project" value="InterPro"/>
</dbReference>
<dbReference type="FunFam" id="3.20.20.20:FF:000001">
    <property type="entry name" value="4-hydroxy-3-methylbut-2-en-1-yl diphosphate synthase (flavodoxin)"/>
    <property type="match status" value="1"/>
</dbReference>
<dbReference type="Gene3D" id="3.20.20.20">
    <property type="entry name" value="Dihydropteroate synthase-like"/>
    <property type="match status" value="1"/>
</dbReference>
<dbReference type="Gene3D" id="3.30.413.10">
    <property type="entry name" value="Sulfite Reductase Hemoprotein, domain 1"/>
    <property type="match status" value="1"/>
</dbReference>
<dbReference type="HAMAP" id="MF_00159">
    <property type="entry name" value="IspG"/>
    <property type="match status" value="1"/>
</dbReference>
<dbReference type="InterPro" id="IPR011005">
    <property type="entry name" value="Dihydropteroate_synth-like_sf"/>
</dbReference>
<dbReference type="InterPro" id="IPR016425">
    <property type="entry name" value="IspG_bac"/>
</dbReference>
<dbReference type="InterPro" id="IPR004588">
    <property type="entry name" value="IspG_bac-typ"/>
</dbReference>
<dbReference type="InterPro" id="IPR045854">
    <property type="entry name" value="NO2/SO3_Rdtase_4Fe4S_sf"/>
</dbReference>
<dbReference type="NCBIfam" id="TIGR00612">
    <property type="entry name" value="ispG_gcpE"/>
    <property type="match status" value="1"/>
</dbReference>
<dbReference type="NCBIfam" id="NF001540">
    <property type="entry name" value="PRK00366.1"/>
    <property type="match status" value="1"/>
</dbReference>
<dbReference type="PANTHER" id="PTHR30454">
    <property type="entry name" value="4-HYDROXY-3-METHYLBUT-2-EN-1-YL DIPHOSPHATE SYNTHASE"/>
    <property type="match status" value="1"/>
</dbReference>
<dbReference type="PANTHER" id="PTHR30454:SF0">
    <property type="entry name" value="4-HYDROXY-3-METHYLBUT-2-EN-1-YL DIPHOSPHATE SYNTHASE (FERREDOXIN), CHLOROPLASTIC"/>
    <property type="match status" value="1"/>
</dbReference>
<dbReference type="Pfam" id="PF04551">
    <property type="entry name" value="GcpE"/>
    <property type="match status" value="1"/>
</dbReference>
<dbReference type="PIRSF" id="PIRSF004640">
    <property type="entry name" value="IspG"/>
    <property type="match status" value="1"/>
</dbReference>
<dbReference type="SUPFAM" id="SSF51717">
    <property type="entry name" value="Dihydropteroate synthetase-like"/>
    <property type="match status" value="1"/>
</dbReference>
<dbReference type="SUPFAM" id="SSF56014">
    <property type="entry name" value="Nitrite and sulphite reductase 4Fe-4S domain-like"/>
    <property type="match status" value="1"/>
</dbReference>
<feature type="chain" id="PRO_1000011518" description="4-hydroxy-3-methylbut-2-en-1-yl diphosphate synthase (flavodoxin)">
    <location>
        <begin position="1"/>
        <end position="371"/>
    </location>
</feature>
<feature type="binding site" evidence="1">
    <location>
        <position position="270"/>
    </location>
    <ligand>
        <name>[4Fe-4S] cluster</name>
        <dbReference type="ChEBI" id="CHEBI:49883"/>
    </ligand>
</feature>
<feature type="binding site" evidence="1">
    <location>
        <position position="273"/>
    </location>
    <ligand>
        <name>[4Fe-4S] cluster</name>
        <dbReference type="ChEBI" id="CHEBI:49883"/>
    </ligand>
</feature>
<feature type="binding site" evidence="1">
    <location>
        <position position="305"/>
    </location>
    <ligand>
        <name>[4Fe-4S] cluster</name>
        <dbReference type="ChEBI" id="CHEBI:49883"/>
    </ligand>
</feature>
<feature type="binding site" evidence="1">
    <location>
        <position position="312"/>
    </location>
    <ligand>
        <name>[4Fe-4S] cluster</name>
        <dbReference type="ChEBI" id="CHEBI:49883"/>
    </ligand>
</feature>
<keyword id="KW-0004">4Fe-4S</keyword>
<keyword id="KW-0408">Iron</keyword>
<keyword id="KW-0411">Iron-sulfur</keyword>
<keyword id="KW-0414">Isoprene biosynthesis</keyword>
<keyword id="KW-0479">Metal-binding</keyword>
<keyword id="KW-0560">Oxidoreductase</keyword>
<keyword id="KW-1185">Reference proteome</keyword>
<gene>
    <name evidence="1" type="primary">ispG</name>
    <name type="ordered locus">Sfri_1116</name>
</gene>
<sequence length="371" mass="40460">MYNESPIIRRPSTRIYVGNVPIGDGAPIAVQSMTNTKTTDVAATVAQIRALEKVGADIVRVSVPTMDDAEAFKIIKQSVNVPLVADIHFDYRIALKVAEYGADCLRINPGNIGNEERIRSVVECARDKNIPIRIGVNGGSLEKDLMDKYREPTPEALFESAMRHVDILDRLNFDQFKVSVKASDVFLAVASYRLLAKQIRQPLHLGITEAGGMRAGSVKSAVGLGMLLAEGIGDTLRISLAADPVEEIKVGFDILKSLRIRSRGINFIACPSCSRQEFDVISTVNELERRLEDITTAMDVSIIGCVVNGPGEALVSDIGLTGGHAKSGYYDDGVRQKERFDNNKIIDGLEAKIRAKASMMANRIAITDKTE</sequence>
<accession>Q085U6</accession>
<comment type="function">
    <text evidence="1">Converts 2C-methyl-D-erythritol 2,4-cyclodiphosphate (ME-2,4cPP) into 1-hydroxy-2-methyl-2-(E)-butenyl 4-diphosphate.</text>
</comment>
<comment type="catalytic activity">
    <reaction evidence="1">
        <text>(2E)-4-hydroxy-3-methylbut-2-enyl diphosphate + oxidized [flavodoxin] + H2O + 2 H(+) = 2-C-methyl-D-erythritol 2,4-cyclic diphosphate + reduced [flavodoxin]</text>
        <dbReference type="Rhea" id="RHEA:43604"/>
        <dbReference type="Rhea" id="RHEA-COMP:10622"/>
        <dbReference type="Rhea" id="RHEA-COMP:10623"/>
        <dbReference type="ChEBI" id="CHEBI:15377"/>
        <dbReference type="ChEBI" id="CHEBI:15378"/>
        <dbReference type="ChEBI" id="CHEBI:57618"/>
        <dbReference type="ChEBI" id="CHEBI:58210"/>
        <dbReference type="ChEBI" id="CHEBI:58483"/>
        <dbReference type="ChEBI" id="CHEBI:128753"/>
        <dbReference type="EC" id="1.17.7.3"/>
    </reaction>
</comment>
<comment type="cofactor">
    <cofactor evidence="1">
        <name>[4Fe-4S] cluster</name>
        <dbReference type="ChEBI" id="CHEBI:49883"/>
    </cofactor>
    <text evidence="1">Binds 1 [4Fe-4S] cluster.</text>
</comment>
<comment type="pathway">
    <text evidence="1">Isoprenoid biosynthesis; isopentenyl diphosphate biosynthesis via DXP pathway; isopentenyl diphosphate from 1-deoxy-D-xylulose 5-phosphate: step 5/6.</text>
</comment>
<comment type="similarity">
    <text evidence="1">Belongs to the IspG family.</text>
</comment>
<proteinExistence type="inferred from homology"/>
<name>ISPG_SHEFN</name>
<evidence type="ECO:0000255" key="1">
    <source>
        <dbReference type="HAMAP-Rule" id="MF_00159"/>
    </source>
</evidence>
<organism>
    <name type="scientific">Shewanella frigidimarina (strain NCIMB 400)</name>
    <dbReference type="NCBI Taxonomy" id="318167"/>
    <lineage>
        <taxon>Bacteria</taxon>
        <taxon>Pseudomonadati</taxon>
        <taxon>Pseudomonadota</taxon>
        <taxon>Gammaproteobacteria</taxon>
        <taxon>Alteromonadales</taxon>
        <taxon>Shewanellaceae</taxon>
        <taxon>Shewanella</taxon>
    </lineage>
</organism>
<reference key="1">
    <citation type="submission" date="2006-08" db="EMBL/GenBank/DDBJ databases">
        <title>Complete sequence of Shewanella frigidimarina NCIMB 400.</title>
        <authorList>
            <consortium name="US DOE Joint Genome Institute"/>
            <person name="Copeland A."/>
            <person name="Lucas S."/>
            <person name="Lapidus A."/>
            <person name="Barry K."/>
            <person name="Detter J.C."/>
            <person name="Glavina del Rio T."/>
            <person name="Hammon N."/>
            <person name="Israni S."/>
            <person name="Dalin E."/>
            <person name="Tice H."/>
            <person name="Pitluck S."/>
            <person name="Fredrickson J.K."/>
            <person name="Kolker E."/>
            <person name="McCuel L.A."/>
            <person name="DiChristina T."/>
            <person name="Nealson K.H."/>
            <person name="Newman D."/>
            <person name="Tiedje J.M."/>
            <person name="Zhou J."/>
            <person name="Romine M.F."/>
            <person name="Culley D.E."/>
            <person name="Serres M."/>
            <person name="Chertkov O."/>
            <person name="Brettin T."/>
            <person name="Bruce D."/>
            <person name="Han C."/>
            <person name="Tapia R."/>
            <person name="Gilna P."/>
            <person name="Schmutz J."/>
            <person name="Larimer F."/>
            <person name="Land M."/>
            <person name="Hauser L."/>
            <person name="Kyrpides N."/>
            <person name="Mikhailova N."/>
            <person name="Richardson P."/>
        </authorList>
    </citation>
    <scope>NUCLEOTIDE SEQUENCE [LARGE SCALE GENOMIC DNA]</scope>
    <source>
        <strain>NCIMB 400</strain>
    </source>
</reference>